<accession>A0T0G3</accession>
<sequence>MKYAIVEISGRQFWIETGKYYDFNRIPTELGKQITLNRVLLLNNEGEILIGKPYLDSVKIKGKILEHLRGKKTIVYKMRPKKKTRKKQGHRQELTRVLIEDIIIN</sequence>
<geneLocation type="chloroplast"/>
<keyword id="KW-0150">Chloroplast</keyword>
<keyword id="KW-0934">Plastid</keyword>
<keyword id="KW-1185">Reference proteome</keyword>
<keyword id="KW-0687">Ribonucleoprotein</keyword>
<keyword id="KW-0689">Ribosomal protein</keyword>
<keyword id="KW-0694">RNA-binding</keyword>
<keyword id="KW-0699">rRNA-binding</keyword>
<feature type="chain" id="PRO_0000276438" description="Large ribosomal subunit protein bL21c">
    <location>
        <begin position="1"/>
        <end position="105"/>
    </location>
</feature>
<protein>
    <recommendedName>
        <fullName evidence="1">Large ribosomal subunit protein bL21c</fullName>
    </recommendedName>
    <alternativeName>
        <fullName evidence="2">50S ribosomal protein L21, chloroplastic</fullName>
    </alternativeName>
</protein>
<name>RK21_PHATC</name>
<reference key="1">
    <citation type="journal article" date="2007" name="Mol. Genet. Genomics">
        <title>Chloroplast genomes of the diatoms Phaeodactylum tricornutum and Thalassiosira pseudonana: comparison with other plastid genomes of the red lineage.</title>
        <authorList>
            <person name="Oudot-Le Secq M.-P."/>
            <person name="Grimwood J."/>
            <person name="Shapiro H."/>
            <person name="Armbrust E.V."/>
            <person name="Bowler C."/>
            <person name="Green B.R."/>
        </authorList>
    </citation>
    <scope>NUCLEOTIDE SEQUENCE [LARGE SCALE GENOMIC DNA]</scope>
    <source>
        <strain>CCAP 1055/1</strain>
    </source>
</reference>
<organism>
    <name type="scientific">Phaeodactylum tricornutum (strain CCAP 1055/1)</name>
    <dbReference type="NCBI Taxonomy" id="556484"/>
    <lineage>
        <taxon>Eukaryota</taxon>
        <taxon>Sar</taxon>
        <taxon>Stramenopiles</taxon>
        <taxon>Ochrophyta</taxon>
        <taxon>Bacillariophyta</taxon>
        <taxon>Bacillariophyceae</taxon>
        <taxon>Bacillariophycidae</taxon>
        <taxon>Naviculales</taxon>
        <taxon>Phaeodactylaceae</taxon>
        <taxon>Phaeodactylum</taxon>
    </lineage>
</organism>
<proteinExistence type="inferred from homology"/>
<dbReference type="EMBL" id="EF067920">
    <property type="protein sequence ID" value="ABK20661.1"/>
    <property type="molecule type" value="Genomic_DNA"/>
</dbReference>
<dbReference type="RefSeq" id="YP_874438.1">
    <property type="nucleotide sequence ID" value="NC_008588.1"/>
</dbReference>
<dbReference type="SMR" id="A0T0G3"/>
<dbReference type="STRING" id="556484.A0T0G3"/>
<dbReference type="GeneID" id="4524561"/>
<dbReference type="InParanoid" id="A0T0G3"/>
<dbReference type="Proteomes" id="UP000000759">
    <property type="component" value="Chloroplast"/>
</dbReference>
<dbReference type="GO" id="GO:0009507">
    <property type="term" value="C:chloroplast"/>
    <property type="evidence" value="ECO:0007669"/>
    <property type="project" value="UniProtKB-SubCell"/>
</dbReference>
<dbReference type="GO" id="GO:0005762">
    <property type="term" value="C:mitochondrial large ribosomal subunit"/>
    <property type="evidence" value="ECO:0007669"/>
    <property type="project" value="TreeGrafter"/>
</dbReference>
<dbReference type="GO" id="GO:0019843">
    <property type="term" value="F:rRNA binding"/>
    <property type="evidence" value="ECO:0007669"/>
    <property type="project" value="UniProtKB-UniRule"/>
</dbReference>
<dbReference type="GO" id="GO:0003735">
    <property type="term" value="F:structural constituent of ribosome"/>
    <property type="evidence" value="ECO:0007669"/>
    <property type="project" value="InterPro"/>
</dbReference>
<dbReference type="GO" id="GO:0006412">
    <property type="term" value="P:translation"/>
    <property type="evidence" value="ECO:0007669"/>
    <property type="project" value="UniProtKB-UniRule"/>
</dbReference>
<dbReference type="HAMAP" id="MF_01363">
    <property type="entry name" value="Ribosomal_bL21"/>
    <property type="match status" value="1"/>
</dbReference>
<dbReference type="InterPro" id="IPR028909">
    <property type="entry name" value="bL21-like"/>
</dbReference>
<dbReference type="InterPro" id="IPR036164">
    <property type="entry name" value="bL21-like_sf"/>
</dbReference>
<dbReference type="InterPro" id="IPR001787">
    <property type="entry name" value="Ribosomal_bL21"/>
</dbReference>
<dbReference type="InterPro" id="IPR018258">
    <property type="entry name" value="Ribosomal_bL21_CS"/>
</dbReference>
<dbReference type="NCBIfam" id="TIGR00061">
    <property type="entry name" value="L21"/>
    <property type="match status" value="1"/>
</dbReference>
<dbReference type="PANTHER" id="PTHR21349">
    <property type="entry name" value="50S RIBOSOMAL PROTEIN L21"/>
    <property type="match status" value="1"/>
</dbReference>
<dbReference type="PANTHER" id="PTHR21349:SF7">
    <property type="entry name" value="LARGE RIBOSOMAL SUBUNIT PROTEIN BL21C"/>
    <property type="match status" value="1"/>
</dbReference>
<dbReference type="Pfam" id="PF00829">
    <property type="entry name" value="Ribosomal_L21p"/>
    <property type="match status" value="1"/>
</dbReference>
<dbReference type="SUPFAM" id="SSF141091">
    <property type="entry name" value="L21p-like"/>
    <property type="match status" value="1"/>
</dbReference>
<dbReference type="PROSITE" id="PS01169">
    <property type="entry name" value="RIBOSOMAL_L21"/>
    <property type="match status" value="1"/>
</dbReference>
<evidence type="ECO:0000255" key="1">
    <source>
        <dbReference type="HAMAP-Rule" id="MF_01363"/>
    </source>
</evidence>
<evidence type="ECO:0000305" key="2"/>
<gene>
    <name evidence="1" type="primary">rpl21</name>
</gene>
<comment type="function">
    <text evidence="1">This protein binds to 23S rRNA.</text>
</comment>
<comment type="subunit">
    <text evidence="1">Part of the 50S ribosomal subunit.</text>
</comment>
<comment type="subcellular location">
    <subcellularLocation>
        <location>Plastid</location>
        <location>Chloroplast</location>
    </subcellularLocation>
</comment>
<comment type="similarity">
    <text evidence="1">Belongs to the bacterial ribosomal protein bL21 family.</text>
</comment>